<protein>
    <recommendedName>
        <fullName evidence="1">Adenylate kinase</fullName>
        <shortName evidence="1">AK</shortName>
        <ecNumber evidence="1">2.7.4.3</ecNumber>
    </recommendedName>
    <alternativeName>
        <fullName evidence="1">ATP-AMP transphosphorylase</fullName>
    </alternativeName>
    <alternativeName>
        <fullName evidence="1">ATP:AMP phosphotransferase</fullName>
    </alternativeName>
    <alternativeName>
        <fullName evidence="1">Adenylate monophosphate kinase</fullName>
    </alternativeName>
</protein>
<proteinExistence type="inferred from homology"/>
<dbReference type="EC" id="2.7.4.3" evidence="1"/>
<dbReference type="EMBL" id="CP001635">
    <property type="protein sequence ID" value="ACS19263.1"/>
    <property type="molecule type" value="Genomic_DNA"/>
</dbReference>
<dbReference type="SMR" id="C5CKV9"/>
<dbReference type="STRING" id="543728.Vapar_2638"/>
<dbReference type="KEGG" id="vap:Vapar_2638"/>
<dbReference type="eggNOG" id="COG0563">
    <property type="taxonomic scope" value="Bacteria"/>
</dbReference>
<dbReference type="HOGENOM" id="CLU_032354_1_2_4"/>
<dbReference type="OrthoDB" id="9805030at2"/>
<dbReference type="UniPathway" id="UPA00588">
    <property type="reaction ID" value="UER00649"/>
</dbReference>
<dbReference type="GO" id="GO:0005737">
    <property type="term" value="C:cytoplasm"/>
    <property type="evidence" value="ECO:0007669"/>
    <property type="project" value="UniProtKB-SubCell"/>
</dbReference>
<dbReference type="GO" id="GO:0004017">
    <property type="term" value="F:adenylate kinase activity"/>
    <property type="evidence" value="ECO:0007669"/>
    <property type="project" value="UniProtKB-UniRule"/>
</dbReference>
<dbReference type="GO" id="GO:0005524">
    <property type="term" value="F:ATP binding"/>
    <property type="evidence" value="ECO:0007669"/>
    <property type="project" value="UniProtKB-UniRule"/>
</dbReference>
<dbReference type="GO" id="GO:0044209">
    <property type="term" value="P:AMP salvage"/>
    <property type="evidence" value="ECO:0007669"/>
    <property type="project" value="UniProtKB-UniRule"/>
</dbReference>
<dbReference type="CDD" id="cd01428">
    <property type="entry name" value="ADK"/>
    <property type="match status" value="1"/>
</dbReference>
<dbReference type="FunFam" id="3.40.50.300:FF:000106">
    <property type="entry name" value="Adenylate kinase mitochondrial"/>
    <property type="match status" value="1"/>
</dbReference>
<dbReference type="Gene3D" id="3.40.50.300">
    <property type="entry name" value="P-loop containing nucleotide triphosphate hydrolases"/>
    <property type="match status" value="1"/>
</dbReference>
<dbReference type="HAMAP" id="MF_00235">
    <property type="entry name" value="Adenylate_kinase_Adk"/>
    <property type="match status" value="1"/>
</dbReference>
<dbReference type="InterPro" id="IPR006259">
    <property type="entry name" value="Adenyl_kin_sub"/>
</dbReference>
<dbReference type="InterPro" id="IPR000850">
    <property type="entry name" value="Adenylat/UMP-CMP_kin"/>
</dbReference>
<dbReference type="InterPro" id="IPR033690">
    <property type="entry name" value="Adenylat_kinase_CS"/>
</dbReference>
<dbReference type="InterPro" id="IPR007862">
    <property type="entry name" value="Adenylate_kinase_lid-dom"/>
</dbReference>
<dbReference type="InterPro" id="IPR027417">
    <property type="entry name" value="P-loop_NTPase"/>
</dbReference>
<dbReference type="NCBIfam" id="TIGR01351">
    <property type="entry name" value="adk"/>
    <property type="match status" value="1"/>
</dbReference>
<dbReference type="NCBIfam" id="NF001379">
    <property type="entry name" value="PRK00279.1-1"/>
    <property type="match status" value="1"/>
</dbReference>
<dbReference type="NCBIfam" id="NF001380">
    <property type="entry name" value="PRK00279.1-2"/>
    <property type="match status" value="1"/>
</dbReference>
<dbReference type="NCBIfam" id="NF001381">
    <property type="entry name" value="PRK00279.1-3"/>
    <property type="match status" value="1"/>
</dbReference>
<dbReference type="NCBIfam" id="NF011100">
    <property type="entry name" value="PRK14527.1"/>
    <property type="match status" value="1"/>
</dbReference>
<dbReference type="PANTHER" id="PTHR23359">
    <property type="entry name" value="NUCLEOTIDE KINASE"/>
    <property type="match status" value="1"/>
</dbReference>
<dbReference type="Pfam" id="PF00406">
    <property type="entry name" value="ADK"/>
    <property type="match status" value="1"/>
</dbReference>
<dbReference type="Pfam" id="PF05191">
    <property type="entry name" value="ADK_lid"/>
    <property type="match status" value="1"/>
</dbReference>
<dbReference type="PRINTS" id="PR00094">
    <property type="entry name" value="ADENYLTKNASE"/>
</dbReference>
<dbReference type="SUPFAM" id="SSF52540">
    <property type="entry name" value="P-loop containing nucleoside triphosphate hydrolases"/>
    <property type="match status" value="1"/>
</dbReference>
<dbReference type="PROSITE" id="PS00113">
    <property type="entry name" value="ADENYLATE_KINASE"/>
    <property type="match status" value="1"/>
</dbReference>
<name>KAD_VARPS</name>
<accession>C5CKV9</accession>
<comment type="function">
    <text evidence="1">Catalyzes the reversible transfer of the terminal phosphate group between ATP and AMP. Plays an important role in cellular energy homeostasis and in adenine nucleotide metabolism.</text>
</comment>
<comment type="catalytic activity">
    <reaction evidence="1">
        <text>AMP + ATP = 2 ADP</text>
        <dbReference type="Rhea" id="RHEA:12973"/>
        <dbReference type="ChEBI" id="CHEBI:30616"/>
        <dbReference type="ChEBI" id="CHEBI:456215"/>
        <dbReference type="ChEBI" id="CHEBI:456216"/>
        <dbReference type="EC" id="2.7.4.3"/>
    </reaction>
</comment>
<comment type="pathway">
    <text evidence="1">Purine metabolism; AMP biosynthesis via salvage pathway; AMP from ADP: step 1/1.</text>
</comment>
<comment type="subunit">
    <text evidence="1">Monomer.</text>
</comment>
<comment type="subcellular location">
    <subcellularLocation>
        <location evidence="1">Cytoplasm</location>
    </subcellularLocation>
</comment>
<comment type="domain">
    <text evidence="1">Consists of three domains, a large central CORE domain and two small peripheral domains, NMPbind and LID, which undergo movements during catalysis. The LID domain closes over the site of phosphoryl transfer upon ATP binding. Assembling and dissambling the active center during each catalytic cycle provides an effective means to prevent ATP hydrolysis.</text>
</comment>
<comment type="similarity">
    <text evidence="1">Belongs to the adenylate kinase family.</text>
</comment>
<reference key="1">
    <citation type="journal article" date="2011" name="J. Bacteriol.">
        <title>Complete genome sequence of the metabolically versatile plant growth-promoting endophyte, Variovorax paradoxus S110.</title>
        <authorList>
            <person name="Han J.I."/>
            <person name="Choi H.K."/>
            <person name="Lee S.W."/>
            <person name="Orwin P.M."/>
            <person name="Kim J."/>
            <person name="Laroe S.L."/>
            <person name="Kim T.G."/>
            <person name="O'Neil J."/>
            <person name="Leadbetter J.R."/>
            <person name="Lee S.Y."/>
            <person name="Hur C.G."/>
            <person name="Spain J.C."/>
            <person name="Ovchinnikova G."/>
            <person name="Goodwin L."/>
            <person name="Han C."/>
        </authorList>
    </citation>
    <scope>NUCLEOTIDE SEQUENCE [LARGE SCALE GENOMIC DNA]</scope>
    <source>
        <strain>S110</strain>
    </source>
</reference>
<organism>
    <name type="scientific">Variovorax paradoxus (strain S110)</name>
    <dbReference type="NCBI Taxonomy" id="543728"/>
    <lineage>
        <taxon>Bacteria</taxon>
        <taxon>Pseudomonadati</taxon>
        <taxon>Pseudomonadota</taxon>
        <taxon>Betaproteobacteria</taxon>
        <taxon>Burkholderiales</taxon>
        <taxon>Comamonadaceae</taxon>
        <taxon>Variovorax</taxon>
    </lineage>
</organism>
<keyword id="KW-0067">ATP-binding</keyword>
<keyword id="KW-0963">Cytoplasm</keyword>
<keyword id="KW-0418">Kinase</keyword>
<keyword id="KW-0545">Nucleotide biosynthesis</keyword>
<keyword id="KW-0547">Nucleotide-binding</keyword>
<keyword id="KW-0808">Transferase</keyword>
<sequence length="218" mass="23649">MRLILLGAPGAGKGTQAAFICQKYGIPQISTGDMLRAAVKAGTPLGQQAKAVMESGGLVSDDLIINLVKERIAQPDCAGGFLFDGFPRTIPQADAMKAAGVKLDYVLEIDVPFSDIIERMSGRRSHPASGRTYHVKFNPPKVEGKDDITGEDLIQRKDDEEETVRKRLEVYSQQTRPLVDYYSAWAKADPASAPKYRAIQGVGSVEEIKQRALAALSS</sequence>
<evidence type="ECO:0000255" key="1">
    <source>
        <dbReference type="HAMAP-Rule" id="MF_00235"/>
    </source>
</evidence>
<gene>
    <name evidence="1" type="primary">adk</name>
    <name type="ordered locus">Vapar_2638</name>
</gene>
<feature type="chain" id="PRO_1000204432" description="Adenylate kinase">
    <location>
        <begin position="1"/>
        <end position="218"/>
    </location>
</feature>
<feature type="region of interest" description="NMP" evidence="1">
    <location>
        <begin position="30"/>
        <end position="59"/>
    </location>
</feature>
<feature type="region of interest" description="LID" evidence="1">
    <location>
        <begin position="122"/>
        <end position="159"/>
    </location>
</feature>
<feature type="binding site" evidence="1">
    <location>
        <begin position="10"/>
        <end position="15"/>
    </location>
    <ligand>
        <name>ATP</name>
        <dbReference type="ChEBI" id="CHEBI:30616"/>
    </ligand>
</feature>
<feature type="binding site" evidence="1">
    <location>
        <position position="31"/>
    </location>
    <ligand>
        <name>AMP</name>
        <dbReference type="ChEBI" id="CHEBI:456215"/>
    </ligand>
</feature>
<feature type="binding site" evidence="1">
    <location>
        <position position="36"/>
    </location>
    <ligand>
        <name>AMP</name>
        <dbReference type="ChEBI" id="CHEBI:456215"/>
    </ligand>
</feature>
<feature type="binding site" evidence="1">
    <location>
        <begin position="57"/>
        <end position="59"/>
    </location>
    <ligand>
        <name>AMP</name>
        <dbReference type="ChEBI" id="CHEBI:456215"/>
    </ligand>
</feature>
<feature type="binding site" evidence="1">
    <location>
        <begin position="85"/>
        <end position="88"/>
    </location>
    <ligand>
        <name>AMP</name>
        <dbReference type="ChEBI" id="CHEBI:456215"/>
    </ligand>
</feature>
<feature type="binding site" evidence="1">
    <location>
        <position position="92"/>
    </location>
    <ligand>
        <name>AMP</name>
        <dbReference type="ChEBI" id="CHEBI:456215"/>
    </ligand>
</feature>
<feature type="binding site" evidence="1">
    <location>
        <position position="123"/>
    </location>
    <ligand>
        <name>ATP</name>
        <dbReference type="ChEBI" id="CHEBI:30616"/>
    </ligand>
</feature>
<feature type="binding site" evidence="1">
    <location>
        <begin position="132"/>
        <end position="133"/>
    </location>
    <ligand>
        <name>ATP</name>
        <dbReference type="ChEBI" id="CHEBI:30616"/>
    </ligand>
</feature>
<feature type="binding site" evidence="1">
    <location>
        <position position="156"/>
    </location>
    <ligand>
        <name>AMP</name>
        <dbReference type="ChEBI" id="CHEBI:456215"/>
    </ligand>
</feature>
<feature type="binding site" evidence="1">
    <location>
        <position position="167"/>
    </location>
    <ligand>
        <name>AMP</name>
        <dbReference type="ChEBI" id="CHEBI:456215"/>
    </ligand>
</feature>
<feature type="binding site" evidence="1">
    <location>
        <position position="203"/>
    </location>
    <ligand>
        <name>ATP</name>
        <dbReference type="ChEBI" id="CHEBI:30616"/>
    </ligand>
</feature>